<keyword id="KW-0032">Aminotransferase</keyword>
<keyword id="KW-0663">Pyridoxal phosphate</keyword>
<keyword id="KW-0808">Transferase</keyword>
<evidence type="ECO:0000255" key="1">
    <source>
        <dbReference type="HAMAP-Rule" id="MF_01642"/>
    </source>
</evidence>
<sequence>MARINDHFLKLKAGYLFPEIARRVQAFAAAHPEAQIIKMGIGDVTEPLPEACRTAMIRAVEEMGERATFRGYGPEQGYEWLRQAIARHDFQARGCDIDASEIFISDGSKCDCGNILDILGHDNTIAITDPVYPVYVDTNVMAGHTGPANERGEYEGLVYLPLTAENHFTASLPQQKVDVIYLCFPNNPTGAVATREHLQAWVDYARAHNSLILFDAAYEAYITEPGIPHSIYEIPGARECAIEFRSFSKTAGFTGTRCAFTVVPKSLRGQAADGSWVDLWSLWYRRQSTKFNGVAYIVQRGAEAVYSEAGQVQVRALVQFYLENARIIREQLATAGIQAYGGVNAPYVWVKAPEGLSSWEFFDKLLHTCHVVGTPGSGFGSAGEGYLRLSAFNSRANVEEAMRRIVSVFGS</sequence>
<comment type="function">
    <text evidence="1">Involved in the synthesis of meso-diaminopimelate (m-DAP or DL-DAP), required for both lysine and peptidoglycan biosynthesis. Catalyzes the direct conversion of tetrahydrodipicolinate to LL-diaminopimelate.</text>
</comment>
<comment type="catalytic activity">
    <reaction evidence="1">
        <text>(2S,6S)-2,6-diaminopimelate + 2-oxoglutarate = (S)-2,3,4,5-tetrahydrodipicolinate + L-glutamate + H2O + H(+)</text>
        <dbReference type="Rhea" id="RHEA:23988"/>
        <dbReference type="ChEBI" id="CHEBI:15377"/>
        <dbReference type="ChEBI" id="CHEBI:15378"/>
        <dbReference type="ChEBI" id="CHEBI:16810"/>
        <dbReference type="ChEBI" id="CHEBI:16845"/>
        <dbReference type="ChEBI" id="CHEBI:29985"/>
        <dbReference type="ChEBI" id="CHEBI:57609"/>
        <dbReference type="EC" id="2.6.1.83"/>
    </reaction>
</comment>
<comment type="cofactor">
    <cofactor evidence="1">
        <name>pyridoxal 5'-phosphate</name>
        <dbReference type="ChEBI" id="CHEBI:597326"/>
    </cofactor>
</comment>
<comment type="pathway">
    <text evidence="1">Amino-acid biosynthesis; L-lysine biosynthesis via DAP pathway; LL-2,6-diaminopimelate from (S)-tetrahydrodipicolinate (aminotransferase route): step 1/1.</text>
</comment>
<comment type="subunit">
    <text evidence="1">Homodimer.</text>
</comment>
<comment type="similarity">
    <text evidence="1">Belongs to the class-I pyridoxal-phosphate-dependent aminotransferase family. LL-diaminopimelate aminotransferase subfamily.</text>
</comment>
<dbReference type="EC" id="2.6.1.83" evidence="1"/>
<dbReference type="EMBL" id="CP000239">
    <property type="protein sequence ID" value="ABD00582.1"/>
    <property type="molecule type" value="Genomic_DNA"/>
</dbReference>
<dbReference type="RefSeq" id="WP_011431255.1">
    <property type="nucleotide sequence ID" value="NC_007775.1"/>
</dbReference>
<dbReference type="SMR" id="Q2JS04"/>
<dbReference type="STRING" id="321327.CYA_2460"/>
<dbReference type="KEGG" id="cya:CYA_2460"/>
<dbReference type="eggNOG" id="COG0436">
    <property type="taxonomic scope" value="Bacteria"/>
</dbReference>
<dbReference type="HOGENOM" id="CLU_051433_0_0_3"/>
<dbReference type="OrthoDB" id="9802328at2"/>
<dbReference type="UniPathway" id="UPA00034">
    <property type="reaction ID" value="UER00466"/>
</dbReference>
<dbReference type="Proteomes" id="UP000008818">
    <property type="component" value="Chromosome"/>
</dbReference>
<dbReference type="GO" id="GO:0010285">
    <property type="term" value="F:L,L-diaminopimelate aminotransferase activity"/>
    <property type="evidence" value="ECO:0007669"/>
    <property type="project" value="UniProtKB-UniRule"/>
</dbReference>
<dbReference type="GO" id="GO:0030170">
    <property type="term" value="F:pyridoxal phosphate binding"/>
    <property type="evidence" value="ECO:0007669"/>
    <property type="project" value="UniProtKB-UniRule"/>
</dbReference>
<dbReference type="GO" id="GO:0033362">
    <property type="term" value="P:lysine biosynthetic process via diaminopimelate, diaminopimelate-aminotransferase pathway"/>
    <property type="evidence" value="ECO:0007669"/>
    <property type="project" value="UniProtKB-UniRule"/>
</dbReference>
<dbReference type="CDD" id="cd00609">
    <property type="entry name" value="AAT_like"/>
    <property type="match status" value="1"/>
</dbReference>
<dbReference type="FunFam" id="3.40.640.10:FF:000099">
    <property type="entry name" value="LL-diaminopimelate aminotransferase, chloroplastic"/>
    <property type="match status" value="1"/>
</dbReference>
<dbReference type="Gene3D" id="3.90.1150.10">
    <property type="entry name" value="Aspartate Aminotransferase, domain 1"/>
    <property type="match status" value="1"/>
</dbReference>
<dbReference type="Gene3D" id="3.40.640.10">
    <property type="entry name" value="Type I PLP-dependent aspartate aminotransferase-like (Major domain)"/>
    <property type="match status" value="1"/>
</dbReference>
<dbReference type="HAMAP" id="MF_01642">
    <property type="entry name" value="DapL_aminotrans_1"/>
    <property type="match status" value="1"/>
</dbReference>
<dbReference type="InterPro" id="IPR004839">
    <property type="entry name" value="Aminotransferase_I/II_large"/>
</dbReference>
<dbReference type="InterPro" id="IPR019942">
    <property type="entry name" value="DapL/ALD1"/>
</dbReference>
<dbReference type="InterPro" id="IPR015424">
    <property type="entry name" value="PyrdxlP-dep_Trfase"/>
</dbReference>
<dbReference type="InterPro" id="IPR015421">
    <property type="entry name" value="PyrdxlP-dep_Trfase_major"/>
</dbReference>
<dbReference type="InterPro" id="IPR015422">
    <property type="entry name" value="PyrdxlP-dep_Trfase_small"/>
</dbReference>
<dbReference type="NCBIfam" id="TIGR03542">
    <property type="entry name" value="DAPAT_plant"/>
    <property type="match status" value="1"/>
</dbReference>
<dbReference type="PANTHER" id="PTHR43144">
    <property type="entry name" value="AMINOTRANSFERASE"/>
    <property type="match status" value="1"/>
</dbReference>
<dbReference type="Pfam" id="PF00155">
    <property type="entry name" value="Aminotran_1_2"/>
    <property type="match status" value="1"/>
</dbReference>
<dbReference type="SUPFAM" id="SSF53383">
    <property type="entry name" value="PLP-dependent transferases"/>
    <property type="match status" value="1"/>
</dbReference>
<proteinExistence type="inferred from homology"/>
<gene>
    <name evidence="1" type="primary">dapL</name>
    <name type="ordered locus">CYA_2460</name>
</gene>
<protein>
    <recommendedName>
        <fullName evidence="1">LL-diaminopimelate aminotransferase</fullName>
        <shortName evidence="1">DAP-AT</shortName>
        <shortName evidence="1">DAP-aminotransferase</shortName>
        <shortName evidence="1">LL-DAP-aminotransferase</shortName>
        <ecNumber evidence="1">2.6.1.83</ecNumber>
    </recommendedName>
</protein>
<accession>Q2JS04</accession>
<name>DAPAT_SYNJA</name>
<feature type="chain" id="PRO_0000312549" description="LL-diaminopimelate aminotransferase">
    <location>
        <begin position="1"/>
        <end position="411"/>
    </location>
</feature>
<feature type="binding site" evidence="1">
    <location>
        <position position="15"/>
    </location>
    <ligand>
        <name>substrate</name>
    </ligand>
</feature>
<feature type="binding site" evidence="1">
    <location>
        <position position="42"/>
    </location>
    <ligand>
        <name>substrate</name>
    </ligand>
</feature>
<feature type="binding site" evidence="1">
    <location>
        <position position="72"/>
    </location>
    <ligand>
        <name>pyridoxal 5'-phosphate</name>
        <dbReference type="ChEBI" id="CHEBI:597326"/>
    </ligand>
</feature>
<feature type="binding site" evidence="1">
    <location>
        <begin position="108"/>
        <end position="109"/>
    </location>
    <ligand>
        <name>pyridoxal 5'-phosphate</name>
        <dbReference type="ChEBI" id="CHEBI:597326"/>
    </ligand>
</feature>
<feature type="binding site" evidence="1">
    <location>
        <position position="109"/>
    </location>
    <ligand>
        <name>substrate</name>
    </ligand>
</feature>
<feature type="binding site" evidence="1">
    <location>
        <position position="132"/>
    </location>
    <ligand>
        <name>pyridoxal 5'-phosphate</name>
        <dbReference type="ChEBI" id="CHEBI:597326"/>
    </ligand>
</feature>
<feature type="binding site" evidence="1">
    <location>
        <position position="132"/>
    </location>
    <ligand>
        <name>substrate</name>
    </ligand>
</feature>
<feature type="binding site" evidence="1">
    <location>
        <position position="187"/>
    </location>
    <ligand>
        <name>pyridoxal 5'-phosphate</name>
        <dbReference type="ChEBI" id="CHEBI:597326"/>
    </ligand>
</feature>
<feature type="binding site" evidence="1">
    <location>
        <position position="187"/>
    </location>
    <ligand>
        <name>substrate</name>
    </ligand>
</feature>
<feature type="binding site" evidence="1">
    <location>
        <position position="218"/>
    </location>
    <ligand>
        <name>pyridoxal 5'-phosphate</name>
        <dbReference type="ChEBI" id="CHEBI:597326"/>
    </ligand>
</feature>
<feature type="binding site" evidence="1">
    <location>
        <begin position="246"/>
        <end position="248"/>
    </location>
    <ligand>
        <name>pyridoxal 5'-phosphate</name>
        <dbReference type="ChEBI" id="CHEBI:597326"/>
    </ligand>
</feature>
<feature type="binding site" evidence="1">
    <location>
        <position position="257"/>
    </location>
    <ligand>
        <name>pyridoxal 5'-phosphate</name>
        <dbReference type="ChEBI" id="CHEBI:597326"/>
    </ligand>
</feature>
<feature type="binding site" evidence="1">
    <location>
        <position position="292"/>
    </location>
    <ligand>
        <name>pyridoxal 5'-phosphate</name>
        <dbReference type="ChEBI" id="CHEBI:597326"/>
    </ligand>
</feature>
<feature type="binding site" evidence="1">
    <location>
        <position position="292"/>
    </location>
    <ligand>
        <name>substrate</name>
    </ligand>
</feature>
<feature type="binding site" evidence="1">
    <location>
        <position position="388"/>
    </location>
    <ligand>
        <name>substrate</name>
    </ligand>
</feature>
<feature type="modified residue" description="N6-(pyridoxal phosphate)lysine" evidence="1">
    <location>
        <position position="249"/>
    </location>
</feature>
<organism>
    <name type="scientific">Synechococcus sp. (strain JA-3-3Ab)</name>
    <name type="common">Cyanobacteria bacterium Yellowstone A-Prime</name>
    <dbReference type="NCBI Taxonomy" id="321327"/>
    <lineage>
        <taxon>Bacteria</taxon>
        <taxon>Bacillati</taxon>
        <taxon>Cyanobacteriota</taxon>
        <taxon>Cyanophyceae</taxon>
        <taxon>Synechococcales</taxon>
        <taxon>Synechococcaceae</taxon>
        <taxon>Synechococcus</taxon>
    </lineage>
</organism>
<reference key="1">
    <citation type="journal article" date="2007" name="ISME J.">
        <title>Population level functional diversity in a microbial community revealed by comparative genomic and metagenomic analyses.</title>
        <authorList>
            <person name="Bhaya D."/>
            <person name="Grossman A.R."/>
            <person name="Steunou A.-S."/>
            <person name="Khuri N."/>
            <person name="Cohan F.M."/>
            <person name="Hamamura N."/>
            <person name="Melendrez M.C."/>
            <person name="Bateson M.M."/>
            <person name="Ward D.M."/>
            <person name="Heidelberg J.F."/>
        </authorList>
    </citation>
    <scope>NUCLEOTIDE SEQUENCE [LARGE SCALE GENOMIC DNA]</scope>
    <source>
        <strain>JA-3-3Ab</strain>
    </source>
</reference>